<feature type="chain" id="PRO_0000076829" description="3-isopropylmalate dehydratase large subunit">
    <location>
        <begin position="1"/>
        <end position="468"/>
    </location>
</feature>
<feature type="binding site" evidence="1">
    <location>
        <position position="347"/>
    </location>
    <ligand>
        <name>[4Fe-4S] cluster</name>
        <dbReference type="ChEBI" id="CHEBI:49883"/>
    </ligand>
</feature>
<feature type="binding site" evidence="1">
    <location>
        <position position="407"/>
    </location>
    <ligand>
        <name>[4Fe-4S] cluster</name>
        <dbReference type="ChEBI" id="CHEBI:49883"/>
    </ligand>
</feature>
<feature type="binding site" evidence="1">
    <location>
        <position position="410"/>
    </location>
    <ligand>
        <name>[4Fe-4S] cluster</name>
        <dbReference type="ChEBI" id="CHEBI:49883"/>
    </ligand>
</feature>
<organism>
    <name type="scientific">Synechococcus sp. (strain ATCC 27144 / PCC 6301 / SAUG 1402/1)</name>
    <name type="common">Anacystis nidulans</name>
    <dbReference type="NCBI Taxonomy" id="269084"/>
    <lineage>
        <taxon>Bacteria</taxon>
        <taxon>Bacillati</taxon>
        <taxon>Cyanobacteriota</taxon>
        <taxon>Cyanophyceae</taxon>
        <taxon>Synechococcales</taxon>
        <taxon>Synechococcaceae</taxon>
        <taxon>Synechococcus</taxon>
    </lineage>
</organism>
<protein>
    <recommendedName>
        <fullName evidence="1">3-isopropylmalate dehydratase large subunit</fullName>
        <ecNumber evidence="1">4.2.1.33</ecNumber>
    </recommendedName>
    <alternativeName>
        <fullName evidence="1">Alpha-IPM isomerase</fullName>
        <shortName evidence="1">IPMI</shortName>
    </alternativeName>
    <alternativeName>
        <fullName evidence="1">Isopropylmalate isomerase</fullName>
    </alternativeName>
</protein>
<comment type="function">
    <text evidence="1">Catalyzes the isomerization between 2-isopropylmalate and 3-isopropylmalate, via the formation of 2-isopropylmaleate.</text>
</comment>
<comment type="catalytic activity">
    <reaction evidence="1">
        <text>(2R,3S)-3-isopropylmalate = (2S)-2-isopropylmalate</text>
        <dbReference type="Rhea" id="RHEA:32287"/>
        <dbReference type="ChEBI" id="CHEBI:1178"/>
        <dbReference type="ChEBI" id="CHEBI:35121"/>
        <dbReference type="EC" id="4.2.1.33"/>
    </reaction>
</comment>
<comment type="cofactor">
    <cofactor evidence="1">
        <name>[4Fe-4S] cluster</name>
        <dbReference type="ChEBI" id="CHEBI:49883"/>
    </cofactor>
    <text evidence="1">Binds 1 [4Fe-4S] cluster per subunit.</text>
</comment>
<comment type="pathway">
    <text evidence="1">Amino-acid biosynthesis; L-leucine biosynthesis; L-leucine from 3-methyl-2-oxobutanoate: step 2/4.</text>
</comment>
<comment type="subunit">
    <text evidence="1">Heterodimer of LeuC and LeuD.</text>
</comment>
<comment type="similarity">
    <text evidence="1">Belongs to the aconitase/IPM isomerase family. LeuC type 1 subfamily.</text>
</comment>
<reference key="1">
    <citation type="journal article" date="2007" name="Photosyn. Res.">
        <title>Complete nucleotide sequence of the freshwater unicellular cyanobacterium Synechococcus elongatus PCC 6301 chromosome: gene content and organization.</title>
        <authorList>
            <person name="Sugita C."/>
            <person name="Ogata K."/>
            <person name="Shikata M."/>
            <person name="Jikuya H."/>
            <person name="Takano J."/>
            <person name="Furumichi M."/>
            <person name="Kanehisa M."/>
            <person name="Omata T."/>
            <person name="Sugiura M."/>
            <person name="Sugita M."/>
        </authorList>
    </citation>
    <scope>NUCLEOTIDE SEQUENCE [LARGE SCALE GENOMIC DNA]</scope>
    <source>
        <strain>ATCC 27144 / PCC 6301 / SAUG 1402/1</strain>
    </source>
</reference>
<proteinExistence type="inferred from homology"/>
<accession>Q5MZY3</accession>
<name>LEUC_SYNP6</name>
<sequence length="468" mass="50343">MSRGTLFDKVWDLHTVATLPSGQTQLFIGLHLIHEVTSPQAFSMLRDRGLTVKFPGRTVATVDHIVPTENQARPFADSLAEEMIVTLERNCRENGIRFYNIGSGSQGIVHVIAPEQGLTQPGMTIACGDSHTSTHGAFGAIAFGIGTSQVRDVLASQTLALSKLKVRKIEVNGELQPGVYAKDVILHIIRKLGVKGGVGYAYEFAGSTFAAMSMEERMTVCNMAIEGGARCGYVNPDQITYDYLQGREFAPQGEAWDRAIAWWESLRSEADAEYDDVVVFDAAEIAPTVTWGITPGQGIGITETIPTPDSLLDEDRAVAAEAYSYMDLEPGAPLQGTKVDVCFIGSCTNGRLSDLREAAKVAQGRKVAAGIKAFVVPGSERVKQQAEAEGLDQIFTAAGFEWRQAGCSMCLAMNPDKLEGRQISASSSNRNFKGRQGSASGRTLLMSPAMVAAAAIAGEVTDVRNWLN</sequence>
<dbReference type="EC" id="4.2.1.33" evidence="1"/>
<dbReference type="EMBL" id="AP008231">
    <property type="protein sequence ID" value="BAD80387.1"/>
    <property type="molecule type" value="Genomic_DNA"/>
</dbReference>
<dbReference type="RefSeq" id="WP_011244507.1">
    <property type="nucleotide sequence ID" value="NZ_CP085785.1"/>
</dbReference>
<dbReference type="SMR" id="Q5MZY3"/>
<dbReference type="GeneID" id="72430770"/>
<dbReference type="KEGG" id="syc:syc2197_d"/>
<dbReference type="eggNOG" id="COG0065">
    <property type="taxonomic scope" value="Bacteria"/>
</dbReference>
<dbReference type="UniPathway" id="UPA00048">
    <property type="reaction ID" value="UER00071"/>
</dbReference>
<dbReference type="Proteomes" id="UP000001175">
    <property type="component" value="Chromosome"/>
</dbReference>
<dbReference type="GO" id="GO:0003861">
    <property type="term" value="F:3-isopropylmalate dehydratase activity"/>
    <property type="evidence" value="ECO:0007669"/>
    <property type="project" value="UniProtKB-UniRule"/>
</dbReference>
<dbReference type="GO" id="GO:0051539">
    <property type="term" value="F:4 iron, 4 sulfur cluster binding"/>
    <property type="evidence" value="ECO:0007669"/>
    <property type="project" value="UniProtKB-KW"/>
</dbReference>
<dbReference type="GO" id="GO:0046872">
    <property type="term" value="F:metal ion binding"/>
    <property type="evidence" value="ECO:0007669"/>
    <property type="project" value="UniProtKB-KW"/>
</dbReference>
<dbReference type="GO" id="GO:0009098">
    <property type="term" value="P:L-leucine biosynthetic process"/>
    <property type="evidence" value="ECO:0007669"/>
    <property type="project" value="UniProtKB-UniRule"/>
</dbReference>
<dbReference type="CDD" id="cd01583">
    <property type="entry name" value="IPMI"/>
    <property type="match status" value="1"/>
</dbReference>
<dbReference type="Gene3D" id="3.30.499.10">
    <property type="entry name" value="Aconitase, domain 3"/>
    <property type="match status" value="2"/>
</dbReference>
<dbReference type="HAMAP" id="MF_01026">
    <property type="entry name" value="LeuC_type1"/>
    <property type="match status" value="1"/>
</dbReference>
<dbReference type="InterPro" id="IPR004430">
    <property type="entry name" value="3-IsopropMal_deHydase_lsu"/>
</dbReference>
<dbReference type="InterPro" id="IPR015931">
    <property type="entry name" value="Acnase/IPM_dHydase_lsu_aba_1/3"/>
</dbReference>
<dbReference type="InterPro" id="IPR001030">
    <property type="entry name" value="Acoase/IPM_deHydtase_lsu_aba"/>
</dbReference>
<dbReference type="InterPro" id="IPR018136">
    <property type="entry name" value="Aconitase_4Fe-4S_BS"/>
</dbReference>
<dbReference type="InterPro" id="IPR036008">
    <property type="entry name" value="Aconitase_4Fe-4S_dom"/>
</dbReference>
<dbReference type="InterPro" id="IPR050067">
    <property type="entry name" value="IPM_dehydratase_rel_enz"/>
</dbReference>
<dbReference type="InterPro" id="IPR033941">
    <property type="entry name" value="IPMI_cat"/>
</dbReference>
<dbReference type="NCBIfam" id="TIGR00170">
    <property type="entry name" value="leuC"/>
    <property type="match status" value="1"/>
</dbReference>
<dbReference type="NCBIfam" id="NF004016">
    <property type="entry name" value="PRK05478.1"/>
    <property type="match status" value="1"/>
</dbReference>
<dbReference type="NCBIfam" id="NF009116">
    <property type="entry name" value="PRK12466.1"/>
    <property type="match status" value="1"/>
</dbReference>
<dbReference type="PANTHER" id="PTHR43822:SF9">
    <property type="entry name" value="3-ISOPROPYLMALATE DEHYDRATASE"/>
    <property type="match status" value="1"/>
</dbReference>
<dbReference type="PANTHER" id="PTHR43822">
    <property type="entry name" value="HOMOACONITASE, MITOCHONDRIAL-RELATED"/>
    <property type="match status" value="1"/>
</dbReference>
<dbReference type="Pfam" id="PF00330">
    <property type="entry name" value="Aconitase"/>
    <property type="match status" value="1"/>
</dbReference>
<dbReference type="PRINTS" id="PR00415">
    <property type="entry name" value="ACONITASE"/>
</dbReference>
<dbReference type="SUPFAM" id="SSF53732">
    <property type="entry name" value="Aconitase iron-sulfur domain"/>
    <property type="match status" value="1"/>
</dbReference>
<dbReference type="PROSITE" id="PS00450">
    <property type="entry name" value="ACONITASE_1"/>
    <property type="match status" value="1"/>
</dbReference>
<dbReference type="PROSITE" id="PS01244">
    <property type="entry name" value="ACONITASE_2"/>
    <property type="match status" value="1"/>
</dbReference>
<gene>
    <name evidence="1" type="primary">leuC</name>
    <name type="ordered locus">syc2197_d</name>
</gene>
<evidence type="ECO:0000255" key="1">
    <source>
        <dbReference type="HAMAP-Rule" id="MF_01026"/>
    </source>
</evidence>
<keyword id="KW-0004">4Fe-4S</keyword>
<keyword id="KW-0028">Amino-acid biosynthesis</keyword>
<keyword id="KW-0100">Branched-chain amino acid biosynthesis</keyword>
<keyword id="KW-0408">Iron</keyword>
<keyword id="KW-0411">Iron-sulfur</keyword>
<keyword id="KW-0432">Leucine biosynthesis</keyword>
<keyword id="KW-0456">Lyase</keyword>
<keyword id="KW-0479">Metal-binding</keyword>